<gene>
    <name type="ordered locus">CPF_0011</name>
</gene>
<name>Y011_CLOP1</name>
<protein>
    <recommendedName>
        <fullName evidence="1">UPF0182 protein CPF_0011</fullName>
    </recommendedName>
</protein>
<dbReference type="EMBL" id="CP000246">
    <property type="protein sequence ID" value="ABG82295.1"/>
    <property type="molecule type" value="Genomic_DNA"/>
</dbReference>
<dbReference type="RefSeq" id="WP_011590027.1">
    <property type="nucleotide sequence ID" value="NC_008261.1"/>
</dbReference>
<dbReference type="SMR" id="Q0TV56"/>
<dbReference type="STRING" id="195103.CPF_0011"/>
<dbReference type="PaxDb" id="195103-CPF_0011"/>
<dbReference type="KEGG" id="cpf:CPF_0011"/>
<dbReference type="eggNOG" id="COG1615">
    <property type="taxonomic scope" value="Bacteria"/>
</dbReference>
<dbReference type="HOGENOM" id="CLU_007733_0_0_9"/>
<dbReference type="Proteomes" id="UP000001823">
    <property type="component" value="Chromosome"/>
</dbReference>
<dbReference type="GO" id="GO:0005576">
    <property type="term" value="C:extracellular region"/>
    <property type="evidence" value="ECO:0007669"/>
    <property type="project" value="TreeGrafter"/>
</dbReference>
<dbReference type="GO" id="GO:0005886">
    <property type="term" value="C:plasma membrane"/>
    <property type="evidence" value="ECO:0007669"/>
    <property type="project" value="UniProtKB-SubCell"/>
</dbReference>
<dbReference type="HAMAP" id="MF_01600">
    <property type="entry name" value="UPF0182"/>
    <property type="match status" value="1"/>
</dbReference>
<dbReference type="InterPro" id="IPR005372">
    <property type="entry name" value="UPF0182"/>
</dbReference>
<dbReference type="NCBIfam" id="NF000825">
    <property type="entry name" value="PRK00068.1"/>
    <property type="match status" value="1"/>
</dbReference>
<dbReference type="PANTHER" id="PTHR39344">
    <property type="entry name" value="UPF0182 PROTEIN SLL1060"/>
    <property type="match status" value="1"/>
</dbReference>
<dbReference type="PANTHER" id="PTHR39344:SF1">
    <property type="entry name" value="UPF0182 PROTEIN SLL1060"/>
    <property type="match status" value="1"/>
</dbReference>
<dbReference type="Pfam" id="PF03699">
    <property type="entry name" value="UPF0182"/>
    <property type="match status" value="1"/>
</dbReference>
<evidence type="ECO:0000255" key="1">
    <source>
        <dbReference type="HAMAP-Rule" id="MF_01600"/>
    </source>
</evidence>
<evidence type="ECO:0000256" key="2">
    <source>
        <dbReference type="SAM" id="MobiDB-lite"/>
    </source>
</evidence>
<reference key="1">
    <citation type="journal article" date="2006" name="Genome Res.">
        <title>Skewed genomic variability in strains of the toxigenic bacterial pathogen, Clostridium perfringens.</title>
        <authorList>
            <person name="Myers G.S.A."/>
            <person name="Rasko D.A."/>
            <person name="Cheung J.K."/>
            <person name="Ravel J."/>
            <person name="Seshadri R."/>
            <person name="DeBoy R.T."/>
            <person name="Ren Q."/>
            <person name="Varga J."/>
            <person name="Awad M.M."/>
            <person name="Brinkac L.M."/>
            <person name="Daugherty S.C."/>
            <person name="Haft D.H."/>
            <person name="Dodson R.J."/>
            <person name="Madupu R."/>
            <person name="Nelson W.C."/>
            <person name="Rosovitz M.J."/>
            <person name="Sullivan S.A."/>
            <person name="Khouri H."/>
            <person name="Dimitrov G.I."/>
            <person name="Watkins K.L."/>
            <person name="Mulligan S."/>
            <person name="Benton J."/>
            <person name="Radune D."/>
            <person name="Fisher D.J."/>
            <person name="Atkins H.S."/>
            <person name="Hiscox T."/>
            <person name="Jost B.H."/>
            <person name="Billington S.J."/>
            <person name="Songer J.G."/>
            <person name="McClane B.A."/>
            <person name="Titball R.W."/>
            <person name="Rood J.I."/>
            <person name="Melville S.B."/>
            <person name="Paulsen I.T."/>
        </authorList>
    </citation>
    <scope>NUCLEOTIDE SEQUENCE [LARGE SCALE GENOMIC DNA]</scope>
    <source>
        <strain>ATCC 13124 / DSM 756 / JCM 1290 / NCIMB 6125 / NCTC 8237 / S 107 / Type A</strain>
    </source>
</reference>
<accession>Q0TV56</accession>
<proteinExistence type="inferred from homology"/>
<organism>
    <name type="scientific">Clostridium perfringens (strain ATCC 13124 / DSM 756 / JCM 1290 / NCIMB 6125 / NCTC 8237 / Type A)</name>
    <dbReference type="NCBI Taxonomy" id="195103"/>
    <lineage>
        <taxon>Bacteria</taxon>
        <taxon>Bacillati</taxon>
        <taxon>Bacillota</taxon>
        <taxon>Clostridia</taxon>
        <taxon>Eubacteriales</taxon>
        <taxon>Clostridiaceae</taxon>
        <taxon>Clostridium</taxon>
    </lineage>
</organism>
<feature type="chain" id="PRO_0000291275" description="UPF0182 protein CPF_0011">
    <location>
        <begin position="1"/>
        <end position="918"/>
    </location>
</feature>
<feature type="transmembrane region" description="Helical" evidence="1">
    <location>
        <begin position="8"/>
        <end position="28"/>
    </location>
</feature>
<feature type="transmembrane region" description="Helical" evidence="1">
    <location>
        <begin position="46"/>
        <end position="66"/>
    </location>
</feature>
<feature type="transmembrane region" description="Helical" evidence="1">
    <location>
        <begin position="91"/>
        <end position="111"/>
    </location>
</feature>
<feature type="transmembrane region" description="Helical" evidence="1">
    <location>
        <begin position="151"/>
        <end position="171"/>
    </location>
</feature>
<feature type="transmembrane region" description="Helical" evidence="1">
    <location>
        <begin position="200"/>
        <end position="220"/>
    </location>
</feature>
<feature type="transmembrane region" description="Helical" evidence="1">
    <location>
        <begin position="243"/>
        <end position="263"/>
    </location>
</feature>
<feature type="transmembrane region" description="Helical" evidence="1">
    <location>
        <begin position="271"/>
        <end position="291"/>
    </location>
</feature>
<feature type="region of interest" description="Disordered" evidence="2">
    <location>
        <begin position="857"/>
        <end position="876"/>
    </location>
</feature>
<feature type="compositionally biased region" description="Basic and acidic residues" evidence="2">
    <location>
        <begin position="857"/>
        <end position="869"/>
    </location>
</feature>
<keyword id="KW-1003">Cell membrane</keyword>
<keyword id="KW-0472">Membrane</keyword>
<keyword id="KW-0812">Transmembrane</keyword>
<keyword id="KW-1133">Transmembrane helix</keyword>
<sequence>MKNKILNTVLISILLLVVVFFVSTNFIINVQWFKEVGYLNVFFTKLIAICKLFVPIFILYFCVIAIYLFTLRKSIRSLVGDTKFKSVKKYFLLSNLVISILGAGATATTQWYKILQFTNAVPFGEVDPIFNKDISFYVFKLPLVQSLFSTAISLIIILVLITVIIYLALGFKDKIYQNKDNVININSKTYGIRKFAGKQLAVLASVLSLLIGCSYLLKSYNLVYSTRGVSYGAGYTDVKITMIFYKVIAVACVISSIVVFISILKLKFRPIIISIASIAVLIVLEPVVAIFTQQFVVKPNEMELEKPYISYSIDATKKAFNIDEIEVKEMEPNENITSEKLEDNKDIIENLKVNSTGPLLSFYQQVQLIKNYYEFNDADTDRYNINGKYTQVFVSPREINRDSMTTWQNKHLRYTHGYGLAMSRVNSVTEFGQPDFVMKDIPTVNTTDINLENPRIYFGESDNDYVIVNTEGGEFDYPTGDTENTFNYNGTGGLKMTPFNRVLFSIYERNPKILMSSSITSESRIILNRNIVKRVQEIAPFLTYDSDPYIVVHDGRLVWMMDAYTSTDKYPFSEPHEGVNYIRNSVKVVVDAFNGNVDFYVTDENDPIINCYLKIYKGLFKPLSEMPEDLKEHFRYPQDLFELQSKVLTKYHVDDPIKLFTEEDLWDRSLEVVKHGGENLSQGDEGKEESILNKAKENKNNEAENEGLYLMTKLPDEENVEMMLLDYFNMRGKQSMVALLGARMDGDNYGELVMYKFPPQRTIYSPILFKNRIQQDPNISKEISLWAGKGSEVIYGDIIIVPIEDSLLYLNTIYLKANSENSMPEMKRVILSNGDKIVIEENIEKALLKLFNYSSSEENKNSNKDETPKNEITSDNSGIKEAADLFNKAIEAQKNGDWATYGEFINKLGDILNKMSQE</sequence>
<comment type="subcellular location">
    <subcellularLocation>
        <location evidence="1">Cell membrane</location>
        <topology evidence="1">Multi-pass membrane protein</topology>
    </subcellularLocation>
</comment>
<comment type="similarity">
    <text evidence="1">Belongs to the UPF0182 family.</text>
</comment>